<organism>
    <name type="scientific">Mesorhizobium japonicum (strain LMG 29417 / CECT 9101 / MAFF 303099)</name>
    <name type="common">Mesorhizobium loti (strain MAFF 303099)</name>
    <dbReference type="NCBI Taxonomy" id="266835"/>
    <lineage>
        <taxon>Bacteria</taxon>
        <taxon>Pseudomonadati</taxon>
        <taxon>Pseudomonadota</taxon>
        <taxon>Alphaproteobacteria</taxon>
        <taxon>Hyphomicrobiales</taxon>
        <taxon>Phyllobacteriaceae</taxon>
        <taxon>Mesorhizobium</taxon>
    </lineage>
</organism>
<protein>
    <recommendedName>
        <fullName evidence="1">Inorganic pyrophosphatase</fullName>
        <ecNumber evidence="1">3.6.1.1</ecNumber>
    </recommendedName>
    <alternativeName>
        <fullName evidence="1">Pyrophosphate phospho-hydrolase</fullName>
        <shortName evidence="1">PPase</shortName>
    </alternativeName>
</protein>
<reference key="1">
    <citation type="journal article" date="2000" name="DNA Res.">
        <title>Complete genome structure of the nitrogen-fixing symbiotic bacterium Mesorhizobium loti.</title>
        <authorList>
            <person name="Kaneko T."/>
            <person name="Nakamura Y."/>
            <person name="Sato S."/>
            <person name="Asamizu E."/>
            <person name="Kato T."/>
            <person name="Sasamoto S."/>
            <person name="Watanabe A."/>
            <person name="Idesawa K."/>
            <person name="Ishikawa A."/>
            <person name="Kawashima K."/>
            <person name="Kimura T."/>
            <person name="Kishida Y."/>
            <person name="Kiyokawa C."/>
            <person name="Kohara M."/>
            <person name="Matsumoto M."/>
            <person name="Matsuno A."/>
            <person name="Mochizuki Y."/>
            <person name="Nakayama S."/>
            <person name="Nakazaki N."/>
            <person name="Shimpo S."/>
            <person name="Sugimoto M."/>
            <person name="Takeuchi C."/>
            <person name="Yamada M."/>
            <person name="Tabata S."/>
        </authorList>
    </citation>
    <scope>NUCLEOTIDE SEQUENCE [LARGE SCALE GENOMIC DNA]</scope>
    <source>
        <strain>LMG 29417 / CECT 9101 / MAFF 303099</strain>
    </source>
</reference>
<keyword id="KW-0963">Cytoplasm</keyword>
<keyword id="KW-0378">Hydrolase</keyword>
<keyword id="KW-0460">Magnesium</keyword>
<keyword id="KW-0479">Metal-binding</keyword>
<evidence type="ECO:0000255" key="1">
    <source>
        <dbReference type="HAMAP-Rule" id="MF_00209"/>
    </source>
</evidence>
<name>IPYR_RHILO</name>
<sequence length="177" mass="19971">MRIEAIATGKNPPEDVNVIIEVPIGGEPIKYEMDKEAGTLFVDRFLHTSMRYPGNYGFVPHTLSGDGDPIDVLVCNTRALVPGCVINVRPIGVLVMEDNAGQDEKVIAVPSPKLTLRYENVTEYTHLPEITRQQVQHFFEHYKDLEPGKWVKIEGWHDSKYAKKMIVDAIERAKKGK</sequence>
<proteinExistence type="inferred from homology"/>
<comment type="function">
    <text evidence="1">Catalyzes the hydrolysis of inorganic pyrophosphate (PPi) forming two phosphate ions.</text>
</comment>
<comment type="catalytic activity">
    <reaction evidence="1">
        <text>diphosphate + H2O = 2 phosphate + H(+)</text>
        <dbReference type="Rhea" id="RHEA:24576"/>
        <dbReference type="ChEBI" id="CHEBI:15377"/>
        <dbReference type="ChEBI" id="CHEBI:15378"/>
        <dbReference type="ChEBI" id="CHEBI:33019"/>
        <dbReference type="ChEBI" id="CHEBI:43474"/>
        <dbReference type="EC" id="3.6.1.1"/>
    </reaction>
</comment>
<comment type="cofactor">
    <cofactor evidence="1">
        <name>Mg(2+)</name>
        <dbReference type="ChEBI" id="CHEBI:18420"/>
    </cofactor>
</comment>
<comment type="subunit">
    <text evidence="1">Homohexamer.</text>
</comment>
<comment type="subcellular location">
    <subcellularLocation>
        <location evidence="1">Cytoplasm</location>
    </subcellularLocation>
</comment>
<comment type="similarity">
    <text evidence="1">Belongs to the PPase family.</text>
</comment>
<feature type="chain" id="PRO_0000137524" description="Inorganic pyrophosphatase">
    <location>
        <begin position="1"/>
        <end position="177"/>
    </location>
</feature>
<feature type="binding site" evidence="1">
    <location>
        <position position="30"/>
    </location>
    <ligand>
        <name>substrate</name>
    </ligand>
</feature>
<feature type="binding site" evidence="1">
    <location>
        <position position="44"/>
    </location>
    <ligand>
        <name>substrate</name>
    </ligand>
</feature>
<feature type="binding site" evidence="1">
    <location>
        <position position="56"/>
    </location>
    <ligand>
        <name>substrate</name>
    </ligand>
</feature>
<feature type="binding site" evidence="1">
    <location>
        <position position="66"/>
    </location>
    <ligand>
        <name>Mg(2+)</name>
        <dbReference type="ChEBI" id="CHEBI:18420"/>
        <label>1</label>
    </ligand>
</feature>
<feature type="binding site" evidence="1">
    <location>
        <position position="71"/>
    </location>
    <ligand>
        <name>Mg(2+)</name>
        <dbReference type="ChEBI" id="CHEBI:18420"/>
        <label>1</label>
    </ligand>
</feature>
<feature type="binding site" evidence="1">
    <location>
        <position position="71"/>
    </location>
    <ligand>
        <name>Mg(2+)</name>
        <dbReference type="ChEBI" id="CHEBI:18420"/>
        <label>2</label>
    </ligand>
</feature>
<feature type="binding site" evidence="1">
    <location>
        <position position="103"/>
    </location>
    <ligand>
        <name>Mg(2+)</name>
        <dbReference type="ChEBI" id="CHEBI:18420"/>
        <label>1</label>
    </ligand>
</feature>
<feature type="binding site" evidence="1">
    <location>
        <position position="142"/>
    </location>
    <ligand>
        <name>substrate</name>
    </ligand>
</feature>
<accession>Q98ER2</accession>
<gene>
    <name evidence="1" type="primary">ppa</name>
    <name type="ordered locus">mll4120</name>
</gene>
<dbReference type="EC" id="3.6.1.1" evidence="1"/>
<dbReference type="EMBL" id="BA000012">
    <property type="protein sequence ID" value="BAB50855.1"/>
    <property type="molecule type" value="Genomic_DNA"/>
</dbReference>
<dbReference type="RefSeq" id="WP_010912198.1">
    <property type="nucleotide sequence ID" value="NC_002678.2"/>
</dbReference>
<dbReference type="SMR" id="Q98ER2"/>
<dbReference type="GeneID" id="66681386"/>
<dbReference type="KEGG" id="mlo:mll4120"/>
<dbReference type="eggNOG" id="COG0221">
    <property type="taxonomic scope" value="Bacteria"/>
</dbReference>
<dbReference type="HOGENOM" id="CLU_073198_1_0_5"/>
<dbReference type="Proteomes" id="UP000000552">
    <property type="component" value="Chromosome"/>
</dbReference>
<dbReference type="GO" id="GO:0005737">
    <property type="term" value="C:cytoplasm"/>
    <property type="evidence" value="ECO:0007669"/>
    <property type="project" value="UniProtKB-SubCell"/>
</dbReference>
<dbReference type="GO" id="GO:0004427">
    <property type="term" value="F:inorganic diphosphate phosphatase activity"/>
    <property type="evidence" value="ECO:0007669"/>
    <property type="project" value="UniProtKB-UniRule"/>
</dbReference>
<dbReference type="GO" id="GO:0000287">
    <property type="term" value="F:magnesium ion binding"/>
    <property type="evidence" value="ECO:0007669"/>
    <property type="project" value="UniProtKB-UniRule"/>
</dbReference>
<dbReference type="GO" id="GO:0006796">
    <property type="term" value="P:phosphate-containing compound metabolic process"/>
    <property type="evidence" value="ECO:0007669"/>
    <property type="project" value="InterPro"/>
</dbReference>
<dbReference type="CDD" id="cd00412">
    <property type="entry name" value="pyrophosphatase"/>
    <property type="match status" value="1"/>
</dbReference>
<dbReference type="FunFam" id="3.90.80.10:FF:000003">
    <property type="entry name" value="Inorganic pyrophosphatase"/>
    <property type="match status" value="1"/>
</dbReference>
<dbReference type="Gene3D" id="3.90.80.10">
    <property type="entry name" value="Inorganic pyrophosphatase"/>
    <property type="match status" value="1"/>
</dbReference>
<dbReference type="HAMAP" id="MF_00209">
    <property type="entry name" value="Inorganic_PPase"/>
    <property type="match status" value="1"/>
</dbReference>
<dbReference type="InterPro" id="IPR008162">
    <property type="entry name" value="Pyrophosphatase"/>
</dbReference>
<dbReference type="InterPro" id="IPR036649">
    <property type="entry name" value="Pyrophosphatase_sf"/>
</dbReference>
<dbReference type="NCBIfam" id="NF002317">
    <property type="entry name" value="PRK01250.1"/>
    <property type="match status" value="1"/>
</dbReference>
<dbReference type="PANTHER" id="PTHR10286">
    <property type="entry name" value="INORGANIC PYROPHOSPHATASE"/>
    <property type="match status" value="1"/>
</dbReference>
<dbReference type="Pfam" id="PF00719">
    <property type="entry name" value="Pyrophosphatase"/>
    <property type="match status" value="1"/>
</dbReference>
<dbReference type="SUPFAM" id="SSF50324">
    <property type="entry name" value="Inorganic pyrophosphatase"/>
    <property type="match status" value="1"/>
</dbReference>
<dbReference type="PROSITE" id="PS00387">
    <property type="entry name" value="PPASE"/>
    <property type="match status" value="1"/>
</dbReference>